<reference key="1">
    <citation type="journal article" date="1974" name="J. Biol. Chem.">
        <title>The amino acid sequence of the Clostridium MP flavodoxin.</title>
        <authorList>
            <person name="Tanaka M."/>
            <person name="Haniu M."/>
            <person name="Yasunobu K.T."/>
            <person name="Mayhew S.G."/>
        </authorList>
    </citation>
    <scope>PROTEIN SEQUENCE</scope>
</reference>
<reference key="2">
    <citation type="journal article" date="1974" name="J. Biol. Chem.">
        <title>The structure of the oxidized form of clostridial flavodoxin at 1.9-A resolution.</title>
        <authorList>
            <person name="Burnett R.M."/>
            <person name="Darling G.D."/>
            <person name="Kendall D.S."/>
            <person name="Lequesne M.E."/>
            <person name="Mayhew S.G."/>
            <person name="Smith W.W."/>
            <person name="Ludwig M.L."/>
        </authorList>
    </citation>
    <scope>X-RAY CRYSTALLOGRAPHY (1.9 ANGSTROMS) OF OXIDIZED FORM</scope>
</reference>
<reference key="3">
    <citation type="journal article" date="1997" name="Biochemistry">
        <title>Control of oxidation-reduction potentials in flavodoxin from Clostridium beijerinckii: the role of conformation changes.</title>
        <authorList>
            <person name="Ludwig M.L."/>
            <person name="Pattridge K.A."/>
            <person name="Metzger A.L."/>
            <person name="Dixon M.M."/>
            <person name="Eren M."/>
            <person name="Feng Y."/>
            <person name="Swenson R.P."/>
        </authorList>
    </citation>
    <scope>X-RAY CRYSTALLOGRAPHY (1.8 ANGSTROMS)</scope>
</reference>
<organism>
    <name type="scientific">Clostridium beijerinckii</name>
    <name type="common">Clostridium MP</name>
    <dbReference type="NCBI Taxonomy" id="1520"/>
    <lineage>
        <taxon>Bacteria</taxon>
        <taxon>Bacillati</taxon>
        <taxon>Bacillota</taxon>
        <taxon>Clostridia</taxon>
        <taxon>Eubacteriales</taxon>
        <taxon>Clostridiaceae</taxon>
        <taxon>Clostridium</taxon>
    </lineage>
</organism>
<name>FLAV_CLOBE</name>
<dbReference type="PDB" id="1FLA">
    <property type="method" value="X-ray"/>
    <property type="resolution" value="1.90 A"/>
    <property type="chains" value="A=1-138"/>
</dbReference>
<dbReference type="PDB" id="1FLD">
    <property type="method" value="X-ray"/>
    <property type="resolution" value="1.80 A"/>
    <property type="chains" value="A=1-138"/>
</dbReference>
<dbReference type="PDB" id="1FLN">
    <property type="method" value="X-ray"/>
    <property type="resolution" value="1.90 A"/>
    <property type="chains" value="A=1-138"/>
</dbReference>
<dbReference type="PDB" id="1FVX">
    <property type="method" value="X-ray"/>
    <property type="resolution" value="1.90 A"/>
    <property type="chains" value="A=1-138"/>
</dbReference>
<dbReference type="PDB" id="2FAX">
    <property type="method" value="X-ray"/>
    <property type="resolution" value="1.80 A"/>
    <property type="chains" value="A=1-136"/>
</dbReference>
<dbReference type="PDB" id="2FDX">
    <property type="method" value="X-ray"/>
    <property type="resolution" value="1.65 A"/>
    <property type="chains" value="A=1-136"/>
</dbReference>
<dbReference type="PDB" id="2FLV">
    <property type="method" value="X-ray"/>
    <property type="resolution" value="1.80 A"/>
    <property type="chains" value="A=1-138"/>
</dbReference>
<dbReference type="PDB" id="2FOX">
    <property type="method" value="X-ray"/>
    <property type="resolution" value="1.80 A"/>
    <property type="chains" value="A=1-138"/>
</dbReference>
<dbReference type="PDB" id="2FVX">
    <property type="method" value="X-ray"/>
    <property type="resolution" value="1.80 A"/>
    <property type="chains" value="A=1-138"/>
</dbReference>
<dbReference type="PDB" id="3NLL">
    <property type="method" value="X-ray"/>
    <property type="resolution" value="2.40 A"/>
    <property type="chains" value="A=1-138"/>
</dbReference>
<dbReference type="PDB" id="4NLL">
    <property type="method" value="X-ray"/>
    <property type="resolution" value="1.90 A"/>
    <property type="chains" value="A=1-138"/>
</dbReference>
<dbReference type="PDB" id="4NUL">
    <property type="method" value="X-ray"/>
    <property type="resolution" value="1.90 A"/>
    <property type="chains" value="A=1-138"/>
</dbReference>
<dbReference type="PDB" id="5NLL">
    <property type="method" value="X-ray"/>
    <property type="resolution" value="1.75 A"/>
    <property type="chains" value="A=1-138"/>
</dbReference>
<dbReference type="PDB" id="5NUL">
    <property type="method" value="X-ray"/>
    <property type="resolution" value="1.60 A"/>
    <property type="chains" value="A=1-138"/>
</dbReference>
<dbReference type="PDB" id="5ULL">
    <property type="method" value="X-ray"/>
    <property type="resolution" value="1.80 A"/>
    <property type="chains" value="A=1-138"/>
</dbReference>
<dbReference type="PDB" id="6NUL">
    <property type="method" value="X-ray"/>
    <property type="resolution" value="1.80 A"/>
    <property type="chains" value="A=1-136"/>
</dbReference>
<dbReference type="PDBsum" id="1FLA"/>
<dbReference type="PDBsum" id="1FLD"/>
<dbReference type="PDBsum" id="1FLN"/>
<dbReference type="PDBsum" id="1FVX"/>
<dbReference type="PDBsum" id="2FAX"/>
<dbReference type="PDBsum" id="2FDX"/>
<dbReference type="PDBsum" id="2FLV"/>
<dbReference type="PDBsum" id="2FOX"/>
<dbReference type="PDBsum" id="2FVX"/>
<dbReference type="PDBsum" id="3NLL"/>
<dbReference type="PDBsum" id="4NLL"/>
<dbReference type="PDBsum" id="4NUL"/>
<dbReference type="PDBsum" id="5NLL"/>
<dbReference type="PDBsum" id="5NUL"/>
<dbReference type="PDBsum" id="5ULL"/>
<dbReference type="PDBsum" id="6NUL"/>
<dbReference type="SMR" id="P00322"/>
<dbReference type="STRING" id="1520.LF65_03122"/>
<dbReference type="DrugBank" id="DB03247">
    <property type="generic name" value="Flavin mononucleotide"/>
</dbReference>
<dbReference type="EvolutionaryTrace" id="P00322"/>
<dbReference type="GO" id="GO:0009055">
    <property type="term" value="F:electron transfer activity"/>
    <property type="evidence" value="ECO:0007669"/>
    <property type="project" value="InterPro"/>
</dbReference>
<dbReference type="GO" id="GO:0010181">
    <property type="term" value="F:FMN binding"/>
    <property type="evidence" value="ECO:0007669"/>
    <property type="project" value="InterPro"/>
</dbReference>
<dbReference type="GO" id="GO:0016651">
    <property type="term" value="F:oxidoreductase activity, acting on NAD(P)H"/>
    <property type="evidence" value="ECO:0007669"/>
    <property type="project" value="UniProtKB-ARBA"/>
</dbReference>
<dbReference type="Gene3D" id="3.40.50.360">
    <property type="match status" value="1"/>
</dbReference>
<dbReference type="InterPro" id="IPR010087">
    <property type="entry name" value="Flav_short"/>
</dbReference>
<dbReference type="InterPro" id="IPR008254">
    <property type="entry name" value="Flavodoxin/NO_synth"/>
</dbReference>
<dbReference type="InterPro" id="IPR001226">
    <property type="entry name" value="Flavodoxin_CS"/>
</dbReference>
<dbReference type="InterPro" id="IPR029039">
    <property type="entry name" value="Flavoprotein-like_sf"/>
</dbReference>
<dbReference type="NCBIfam" id="TIGR01753">
    <property type="entry name" value="flav_short"/>
    <property type="match status" value="1"/>
</dbReference>
<dbReference type="PANTHER" id="PTHR43717">
    <property type="entry name" value="ANAEROBIC NITRIC OXIDE REDUCTASE FLAVORUBREDOXIN"/>
    <property type="match status" value="1"/>
</dbReference>
<dbReference type="PANTHER" id="PTHR43717:SF1">
    <property type="entry name" value="ANAEROBIC NITRIC OXIDE REDUCTASE FLAVORUBREDOXIN"/>
    <property type="match status" value="1"/>
</dbReference>
<dbReference type="Pfam" id="PF00258">
    <property type="entry name" value="Flavodoxin_1"/>
    <property type="match status" value="1"/>
</dbReference>
<dbReference type="SUPFAM" id="SSF52218">
    <property type="entry name" value="Flavoproteins"/>
    <property type="match status" value="1"/>
</dbReference>
<dbReference type="PROSITE" id="PS00201">
    <property type="entry name" value="FLAVODOXIN"/>
    <property type="match status" value="1"/>
</dbReference>
<dbReference type="PROSITE" id="PS50902">
    <property type="entry name" value="FLAVODOXIN_LIKE"/>
    <property type="match status" value="1"/>
</dbReference>
<comment type="function">
    <text>Low-potential electron donor to a number of redox enzymes.</text>
</comment>
<comment type="cofactor">
    <cofactor>
        <name>FMN</name>
        <dbReference type="ChEBI" id="CHEBI:58210"/>
    </cofactor>
</comment>
<comment type="similarity">
    <text evidence="2">Belongs to the flavodoxin family.</text>
</comment>
<evidence type="ECO:0000255" key="1">
    <source>
        <dbReference type="PROSITE-ProRule" id="PRU00088"/>
    </source>
</evidence>
<evidence type="ECO:0000305" key="2"/>
<evidence type="ECO:0007829" key="3">
    <source>
        <dbReference type="PDB" id="5NUL"/>
    </source>
</evidence>
<proteinExistence type="evidence at protein level"/>
<feature type="chain" id="PRO_0000171613" description="Flavodoxin">
    <location>
        <begin position="1"/>
        <end position="138"/>
    </location>
</feature>
<feature type="domain" description="Flavodoxin-like" evidence="1">
    <location>
        <begin position="1"/>
        <end position="136"/>
    </location>
</feature>
<feature type="strand" evidence="3">
    <location>
        <begin position="2"/>
        <end position="6"/>
    </location>
</feature>
<feature type="strand" evidence="3">
    <location>
        <begin position="8"/>
        <end position="10"/>
    </location>
</feature>
<feature type="helix" evidence="3">
    <location>
        <begin position="11"/>
        <end position="25"/>
    </location>
</feature>
<feature type="strand" evidence="3">
    <location>
        <begin position="31"/>
        <end position="34"/>
    </location>
</feature>
<feature type="helix" evidence="3">
    <location>
        <begin position="35"/>
        <end position="37"/>
    </location>
</feature>
<feature type="helix" evidence="3">
    <location>
        <begin position="40"/>
        <end position="43"/>
    </location>
</feature>
<feature type="strand" evidence="3">
    <location>
        <begin position="47"/>
        <end position="53"/>
    </location>
</feature>
<feature type="turn" evidence="3">
    <location>
        <begin position="57"/>
        <end position="59"/>
    </location>
</feature>
<feature type="turn" evidence="3">
    <location>
        <begin position="63"/>
        <end position="65"/>
    </location>
</feature>
<feature type="helix" evidence="3">
    <location>
        <begin position="66"/>
        <end position="73"/>
    </location>
</feature>
<feature type="helix" evidence="3">
    <location>
        <begin position="74"/>
        <end position="76"/>
    </location>
</feature>
<feature type="strand" evidence="3">
    <location>
        <begin position="81"/>
        <end position="91"/>
    </location>
</feature>
<feature type="helix" evidence="3">
    <location>
        <begin position="94"/>
        <end position="105"/>
    </location>
</feature>
<feature type="strand" evidence="3">
    <location>
        <begin position="115"/>
        <end position="120"/>
    </location>
</feature>
<feature type="helix" evidence="3">
    <location>
        <begin position="122"/>
        <end position="124"/>
    </location>
</feature>
<feature type="helix" evidence="3">
    <location>
        <begin position="125"/>
        <end position="136"/>
    </location>
</feature>
<protein>
    <recommendedName>
        <fullName>Flavodoxin</fullName>
    </recommendedName>
</protein>
<sequence>MKIVYWSGTGNTEKMAELIAKGIIESGKDVNTINVSDVNIDELLNEDILILGCSAMGDEVLEESEFEPFIEEISTKISGKKVALFGSYGWGDGKWMRDFEERMNGYGCVVVETPLIVQNEPDEAEQDCIEFGKKIANI</sequence>
<keyword id="KW-0002">3D-structure</keyword>
<keyword id="KW-0903">Direct protein sequencing</keyword>
<keyword id="KW-0249">Electron transport</keyword>
<keyword id="KW-0285">Flavoprotein</keyword>
<keyword id="KW-0288">FMN</keyword>
<keyword id="KW-0813">Transport</keyword>
<accession>P00322</accession>